<protein>
    <recommendedName>
        <fullName evidence="3">Merozoite surface protein 2</fullName>
    </recommendedName>
    <alternativeName>
        <fullName evidence="7">Merozoite surface antigen 2</fullName>
        <shortName>MSA-2</shortName>
    </alternativeName>
</protein>
<reference key="1">
    <citation type="journal article" date="1990" name="Mol. Biochem. Parasitol.">
        <title>Sequence comparison of allelic forms of the Plasmodium falciparum merozoite surface antigen MSA2.</title>
        <authorList>
            <person name="Thomas A.W."/>
            <person name="Carr D.A."/>
            <person name="Carter J.M."/>
            <person name="Lyon J.A."/>
        </authorList>
    </citation>
    <scope>NUCLEOTIDE SEQUENCE [GENOMIC DNA]</scope>
    <scope>POLYMORPHISM</scope>
    <scope>REPEATS</scope>
</reference>
<comment type="function">
    <text evidence="3">May play a role in the merozoite attachment to the erythrocyte.</text>
</comment>
<comment type="subcellular location">
    <subcellularLocation>
        <location evidence="3">Cell membrane</location>
        <topology evidence="1">Lipid-anchor</topology>
        <topology evidence="1">GPI-anchor</topology>
    </subcellularLocation>
    <text evidence="3">During host erythrocyte invasion by merozoites, carried into invaded erythrocytes where it is rapidly degraded.</text>
</comment>
<comment type="domain">
    <text evidence="3">The N-terminal region appears to be involved in lipid binding.</text>
</comment>
<comment type="polymorphism">
    <text evidence="6">The sequence varies across Plasmodium strains (PubMed:2090943). All variants share conserved N- and C-terminal regions; however, they belong to two allelic families, represented by 3D7 strain and FC27 strain sequences respectively, distinguished by tandem repeats and dimorphic flanking sequences within the central region of the protein (PubMed:2090943).</text>
</comment>
<accession>Q99319</accession>
<sequence>MKVIKTLSIINFFIFVTFNIKNESKYSNTFINNAYNMSIRRSMEESNPPTGASGRAGAGASGRAGAGASGRAGAGAGAVASAGSGDGAVASAGNGANPGADAKRSTSTPATTTTTTTTNDAEASTSTSSENPNHNNAKTNPKGKEVQEPNKANTETQNNSNVQQDSQTKSNVPPTQDADTKSPTAQPEQAENSAPTAEQTESPELQSAPENKGTGQHGHMHGSRNNHPQNTSDSQKECTDGNKENCGAATSLLNNSSNIASINKFVVLISATLVLSFAIFI</sequence>
<dbReference type="EMBL" id="M60189">
    <property type="protein sequence ID" value="AAA29689.1"/>
    <property type="molecule type" value="Genomic_DNA"/>
</dbReference>
<dbReference type="GlyCosmos" id="Q99319">
    <property type="glycosylation" value="6 sites, No reported glycans"/>
</dbReference>
<dbReference type="GO" id="GO:0005886">
    <property type="term" value="C:plasma membrane"/>
    <property type="evidence" value="ECO:0007669"/>
    <property type="project" value="UniProtKB-SubCell"/>
</dbReference>
<dbReference type="GO" id="GO:0098552">
    <property type="term" value="C:side of membrane"/>
    <property type="evidence" value="ECO:0007669"/>
    <property type="project" value="UniProtKB-KW"/>
</dbReference>
<dbReference type="GO" id="GO:0007155">
    <property type="term" value="P:cell adhesion"/>
    <property type="evidence" value="ECO:0007669"/>
    <property type="project" value="InterPro"/>
</dbReference>
<dbReference type="InterPro" id="IPR001136">
    <property type="entry name" value="MSA2"/>
</dbReference>
<dbReference type="Pfam" id="PF00985">
    <property type="entry name" value="MSA_2"/>
    <property type="match status" value="1"/>
</dbReference>
<dbReference type="PIRSF" id="PIRSF003575">
    <property type="entry name" value="MSA_2"/>
    <property type="match status" value="1"/>
</dbReference>
<feature type="signal peptide" evidence="4">
    <location>
        <begin position="1"/>
        <end position="20"/>
    </location>
</feature>
<feature type="chain" id="PRO_0000024596" description="Merozoite surface protein 2">
    <location>
        <begin position="21"/>
        <end position="255"/>
    </location>
</feature>
<feature type="propeptide" id="PRO_0000024597" description="Removed in mature form" evidence="1">
    <location>
        <begin position="256"/>
        <end position="281"/>
    </location>
</feature>
<feature type="repeat" description="1" evidence="6">
    <location>
        <begin position="51"/>
        <end position="58"/>
    </location>
</feature>
<feature type="repeat" description="2" evidence="6">
    <location>
        <begin position="59"/>
        <end position="66"/>
    </location>
</feature>
<feature type="repeat" description="3" evidence="6">
    <location>
        <begin position="67"/>
        <end position="74"/>
    </location>
</feature>
<feature type="region of interest" description="Disordered" evidence="5">
    <location>
        <begin position="42"/>
        <end position="242"/>
    </location>
</feature>
<feature type="region of interest" description="Polymorphic region" evidence="6">
    <location>
        <begin position="44"/>
        <end position="207"/>
    </location>
</feature>
<feature type="region of interest" description="3 X 8 AA tandem repeats of G-A-S-G-R-A-G-A" evidence="6">
    <location>
        <begin position="51"/>
        <end position="74"/>
    </location>
</feature>
<feature type="compositionally biased region" description="Gly residues" evidence="5">
    <location>
        <begin position="54"/>
        <end position="76"/>
    </location>
</feature>
<feature type="compositionally biased region" description="Low complexity" evidence="5">
    <location>
        <begin position="77"/>
        <end position="133"/>
    </location>
</feature>
<feature type="compositionally biased region" description="Polar residues" evidence="5">
    <location>
        <begin position="150"/>
        <end position="174"/>
    </location>
</feature>
<feature type="compositionally biased region" description="Polar residues" evidence="5">
    <location>
        <begin position="181"/>
        <end position="209"/>
    </location>
</feature>
<feature type="lipid moiety-binding region" description="GPI-anchor amidated asparagine" evidence="1">
    <location>
        <position position="255"/>
    </location>
</feature>
<feature type="glycosylation site" description="N-linked (GlcNAc...) asparagine" evidence="4">
    <location>
        <position position="22"/>
    </location>
</feature>
<feature type="glycosylation site" description="N-linked (GlcNAc...) asparagine" evidence="4">
    <location>
        <position position="36"/>
    </location>
</feature>
<feature type="glycosylation site" description="N-linked (GlcNAc...) asparagine" evidence="4">
    <location>
        <position position="158"/>
    </location>
</feature>
<feature type="glycosylation site" description="N-linked (GlcNAc...) asparagine" evidence="4">
    <location>
        <position position="230"/>
    </location>
</feature>
<feature type="glycosylation site" description="N-linked (GlcNAc...) asparagine" evidence="4">
    <location>
        <position position="254"/>
    </location>
</feature>
<feature type="glycosylation site" description="N-linked (GlcNAc...) asparagine" evidence="4">
    <location>
        <position position="255"/>
    </location>
</feature>
<feature type="disulfide bond" evidence="2">
    <location>
        <begin position="238"/>
        <end position="246"/>
    </location>
</feature>
<name>MSA2_PLAFH</name>
<gene>
    <name evidence="3" type="primary">MSP2</name>
    <name evidence="7" type="synonym">MSA2</name>
</gene>
<organism>
    <name type="scientific">Plasmodium falciparum (isolate thtn / Thailand)</name>
    <dbReference type="NCBI Taxonomy" id="70151"/>
    <lineage>
        <taxon>Eukaryota</taxon>
        <taxon>Sar</taxon>
        <taxon>Alveolata</taxon>
        <taxon>Apicomplexa</taxon>
        <taxon>Aconoidasida</taxon>
        <taxon>Haemosporida</taxon>
        <taxon>Plasmodiidae</taxon>
        <taxon>Plasmodium</taxon>
        <taxon>Plasmodium (Laverania)</taxon>
    </lineage>
</organism>
<keyword id="KW-1003">Cell membrane</keyword>
<keyword id="KW-1015">Disulfide bond</keyword>
<keyword id="KW-0325">Glycoprotein</keyword>
<keyword id="KW-0336">GPI-anchor</keyword>
<keyword id="KW-0449">Lipoprotein</keyword>
<keyword id="KW-0461">Malaria</keyword>
<keyword id="KW-0472">Membrane</keyword>
<keyword id="KW-0477">Merozoite</keyword>
<keyword id="KW-0677">Repeat</keyword>
<keyword id="KW-0732">Signal</keyword>
<evidence type="ECO:0000250" key="1">
    <source>
        <dbReference type="UniProtKB" id="P19260"/>
    </source>
</evidence>
<evidence type="ECO:0000250" key="2">
    <source>
        <dbReference type="UniProtKB" id="P19599"/>
    </source>
</evidence>
<evidence type="ECO:0000250" key="3">
    <source>
        <dbReference type="UniProtKB" id="P50498"/>
    </source>
</evidence>
<evidence type="ECO:0000255" key="4"/>
<evidence type="ECO:0000256" key="5">
    <source>
        <dbReference type="SAM" id="MobiDB-lite"/>
    </source>
</evidence>
<evidence type="ECO:0000269" key="6">
    <source>
    </source>
</evidence>
<evidence type="ECO:0000303" key="7">
    <source>
    </source>
</evidence>
<proteinExistence type="inferred from homology"/>